<evidence type="ECO:0000250" key="1"/>
<evidence type="ECO:0000255" key="2"/>
<evidence type="ECO:0000305" key="3"/>
<keyword id="KW-0325">Glycoprotein</keyword>
<keyword id="KW-0378">Hydrolase</keyword>
<keyword id="KW-0479">Metal-binding</keyword>
<keyword id="KW-0482">Metalloprotease</keyword>
<keyword id="KW-0645">Protease</keyword>
<keyword id="KW-1185">Reference proteome</keyword>
<keyword id="KW-0964">Secreted</keyword>
<keyword id="KW-0732">Signal</keyword>
<keyword id="KW-0862">Zinc</keyword>
<organism>
    <name type="scientific">Pyrenophora teres f. teres (strain 0-1)</name>
    <name type="common">Barley net blotch fungus</name>
    <name type="synonym">Drechslera teres f. teres</name>
    <dbReference type="NCBI Taxonomy" id="861557"/>
    <lineage>
        <taxon>Eukaryota</taxon>
        <taxon>Fungi</taxon>
        <taxon>Dikarya</taxon>
        <taxon>Ascomycota</taxon>
        <taxon>Pezizomycotina</taxon>
        <taxon>Dothideomycetes</taxon>
        <taxon>Pleosporomycetidae</taxon>
        <taxon>Pleosporales</taxon>
        <taxon>Pleosporineae</taxon>
        <taxon>Pleosporaceae</taxon>
        <taxon>Pyrenophora</taxon>
    </lineage>
</organism>
<dbReference type="EC" id="3.4.-.-"/>
<dbReference type="EMBL" id="GL533450">
    <property type="protein sequence ID" value="EFQ94200.1"/>
    <property type="molecule type" value="Genomic_DNA"/>
</dbReference>
<dbReference type="RefSeq" id="XP_003297704.1">
    <property type="nucleotide sequence ID" value="XM_003297656.1"/>
</dbReference>
<dbReference type="SMR" id="E3RJ99"/>
<dbReference type="EnsemblFungi" id="EFQ94200">
    <property type="protein sequence ID" value="EFQ94200"/>
    <property type="gene ID" value="PTT_08196"/>
</dbReference>
<dbReference type="KEGG" id="pte:PTT_08196"/>
<dbReference type="eggNOG" id="ENOG502R701">
    <property type="taxonomic scope" value="Eukaryota"/>
</dbReference>
<dbReference type="HOGENOM" id="CLU_047420_0_0_1"/>
<dbReference type="OrthoDB" id="10013407at2759"/>
<dbReference type="Proteomes" id="UP000001067">
    <property type="component" value="Unassembled WGS sequence"/>
</dbReference>
<dbReference type="GO" id="GO:0005576">
    <property type="term" value="C:extracellular region"/>
    <property type="evidence" value="ECO:0007669"/>
    <property type="project" value="UniProtKB-SubCell"/>
</dbReference>
<dbReference type="GO" id="GO:0046872">
    <property type="term" value="F:metal ion binding"/>
    <property type="evidence" value="ECO:0007669"/>
    <property type="project" value="UniProtKB-KW"/>
</dbReference>
<dbReference type="GO" id="GO:0008235">
    <property type="term" value="F:metalloexopeptidase activity"/>
    <property type="evidence" value="ECO:0007669"/>
    <property type="project" value="InterPro"/>
</dbReference>
<dbReference type="GO" id="GO:0006508">
    <property type="term" value="P:proteolysis"/>
    <property type="evidence" value="ECO:0007669"/>
    <property type="project" value="UniProtKB-KW"/>
</dbReference>
<dbReference type="CDD" id="cd05642">
    <property type="entry name" value="M28_like"/>
    <property type="match status" value="1"/>
</dbReference>
<dbReference type="Gene3D" id="3.40.630.10">
    <property type="entry name" value="Zn peptidases"/>
    <property type="match status" value="1"/>
</dbReference>
<dbReference type="InterPro" id="IPR045175">
    <property type="entry name" value="M28_fam"/>
</dbReference>
<dbReference type="InterPro" id="IPR007484">
    <property type="entry name" value="Peptidase_M28"/>
</dbReference>
<dbReference type="PANTHER" id="PTHR12147">
    <property type="entry name" value="METALLOPEPTIDASE M28 FAMILY MEMBER"/>
    <property type="match status" value="1"/>
</dbReference>
<dbReference type="PANTHER" id="PTHR12147:SF26">
    <property type="entry name" value="PEPTIDASE M28 DOMAIN-CONTAINING PROTEIN"/>
    <property type="match status" value="1"/>
</dbReference>
<dbReference type="Pfam" id="PF04389">
    <property type="entry name" value="Peptidase_M28"/>
    <property type="match status" value="1"/>
</dbReference>
<dbReference type="SUPFAM" id="SSF53187">
    <property type="entry name" value="Zn-dependent exopeptidases"/>
    <property type="match status" value="1"/>
</dbReference>
<reference key="1">
    <citation type="journal article" date="2010" name="Genome Biol.">
        <title>A first genome assembly of the barley fungal pathogen Pyrenophora teres f. teres.</title>
        <authorList>
            <person name="Ellwood S.R."/>
            <person name="Liu Z."/>
            <person name="Syme R.A."/>
            <person name="Lai Z."/>
            <person name="Hane J.K."/>
            <person name="Keiper F."/>
            <person name="Moffat C.S."/>
            <person name="Oliver R.P."/>
            <person name="Friesen T.L."/>
        </authorList>
    </citation>
    <scope>NUCLEOTIDE SEQUENCE [LARGE SCALE GENOMIC DNA]</scope>
    <source>
        <strain>0-1</strain>
    </source>
</reference>
<protein>
    <recommendedName>
        <fullName>Probable zinc metalloprotease PTT_08196</fullName>
        <ecNumber>3.4.-.-</ecNumber>
    </recommendedName>
</protein>
<gene>
    <name type="ORF">PTT_08196</name>
</gene>
<comment type="cofactor">
    <cofactor evidence="1">
        <name>Zn(2+)</name>
        <dbReference type="ChEBI" id="CHEBI:29105"/>
    </cofactor>
    <text evidence="1">Binds 2 Zn(2+) ions per subunit.</text>
</comment>
<comment type="subcellular location">
    <subcellularLocation>
        <location evidence="3">Secreted</location>
    </subcellularLocation>
</comment>
<comment type="similarity">
    <text evidence="3">Belongs to the peptidase M28 family. M28B subfamily.</text>
</comment>
<proteinExistence type="inferred from homology"/>
<feature type="signal peptide" evidence="2">
    <location>
        <begin position="1"/>
        <end position="18"/>
    </location>
</feature>
<feature type="chain" id="PRO_0000411762" description="Probable zinc metalloprotease PTT_08196">
    <location>
        <begin position="19"/>
        <end position="483"/>
    </location>
</feature>
<feature type="domain" description="Fibronectin type-III">
    <location>
        <begin position="396"/>
        <end position="483"/>
    </location>
</feature>
<feature type="binding site" evidence="1">
    <location>
        <position position="167"/>
    </location>
    <ligand>
        <name>Zn(2+)</name>
        <dbReference type="ChEBI" id="CHEBI:29105"/>
        <label>1</label>
    </ligand>
</feature>
<feature type="binding site" evidence="1">
    <location>
        <position position="187"/>
    </location>
    <ligand>
        <name>Zn(2+)</name>
        <dbReference type="ChEBI" id="CHEBI:29105"/>
        <label>1</label>
    </ligand>
</feature>
<feature type="binding site" evidence="1">
    <location>
        <position position="187"/>
    </location>
    <ligand>
        <name>Zn(2+)</name>
        <dbReference type="ChEBI" id="CHEBI:29105"/>
        <label>2</label>
        <note>catalytic</note>
    </ligand>
</feature>
<feature type="binding site" evidence="1">
    <location>
        <position position="220"/>
    </location>
    <ligand>
        <name>Zn(2+)</name>
        <dbReference type="ChEBI" id="CHEBI:29105"/>
        <label>2</label>
        <note>catalytic</note>
    </ligand>
</feature>
<feature type="binding site" evidence="1">
    <location>
        <position position="247"/>
    </location>
    <ligand>
        <name>Zn(2+)</name>
        <dbReference type="ChEBI" id="CHEBI:29105"/>
        <label>1</label>
    </ligand>
</feature>
<feature type="glycosylation site" description="N-linked (GlcNAc...) asparagine" evidence="2">
    <location>
        <position position="96"/>
    </location>
</feature>
<feature type="glycosylation site" description="N-linked (GlcNAc...) asparagine" evidence="2">
    <location>
        <position position="121"/>
    </location>
</feature>
<feature type="glycosylation site" description="N-linked (GlcNAc...) asparagine" evidence="2">
    <location>
        <position position="235"/>
    </location>
</feature>
<feature type="glycosylation site" description="N-linked (GlcNAc...) asparagine" evidence="2">
    <location>
        <position position="310"/>
    </location>
</feature>
<feature type="glycosylation site" description="N-linked (GlcNAc...) asparagine" evidence="2">
    <location>
        <position position="362"/>
    </location>
</feature>
<feature type="glycosylation site" description="N-linked (GlcNAc...) asparagine" evidence="2">
    <location>
        <position position="401"/>
    </location>
</feature>
<feature type="glycosylation site" description="N-linked (GlcNAc...) asparagine" evidence="2">
    <location>
        <position position="411"/>
    </location>
</feature>
<feature type="glycosylation site" description="N-linked (GlcNAc...) asparagine" evidence="2">
    <location>
        <position position="421"/>
    </location>
</feature>
<sequence length="483" mass="52168">MLFRSVILSNALLLPACAHDILSNLDLSLPIAANAESYTDCANAAWPPSNVGVELVPQPPDDQLRAMVDEVSAENIEATITKLVSFGTRHTLSTFNSSTRGINAARDWIASEMRKYAAESNGTMTVEVQSYVQSVASRIPFPVTISNVLAKATGSEDPNRVYVMTGHYDSRVTDVLNYESDAPGANDDASGTAIAMELARVLAKHQPKSTIILGAVAGEEQGLYGSTYLAQTLKNTSTNVEGMLNCDIVGSSTGDRGQKDPFTIRAFAQGPPPISAESSARAAQRLQIGGENDSPARELARFSAEVAANNATGMNVAIIYRLDRFLRGGDHTGFLQAGYPAIRYTEPNENFAHQHQDIRTENGTVYGDLIEFVDFDFTARVGKVNLATLWSLAQAPAMPRNVTIDATILDNNSRIKWIVSNKTDVASYEVVWRSTIASLWTHMLDVGKVGYVVLPLSKDNVIFGIRAVGTNGFKSPAVYPFPA</sequence>
<name>M28P2_PYRTT</name>
<accession>E3RJ99</accession>